<feature type="chain" id="PRO_1000198178" description="Trigger factor">
    <location>
        <begin position="1"/>
        <end position="427"/>
    </location>
</feature>
<feature type="domain" description="PPIase FKBP-type" evidence="1">
    <location>
        <begin position="163"/>
        <end position="248"/>
    </location>
</feature>
<dbReference type="EC" id="5.2.1.8" evidence="1"/>
<dbReference type="EMBL" id="CP000918">
    <property type="protein sequence ID" value="ACO17756.1"/>
    <property type="molecule type" value="Genomic_DNA"/>
</dbReference>
<dbReference type="RefSeq" id="WP_000116472.1">
    <property type="nucleotide sequence ID" value="NC_012468.1"/>
</dbReference>
<dbReference type="SMR" id="C1C5D8"/>
<dbReference type="KEGG" id="snm:SP70585_0472"/>
<dbReference type="HOGENOM" id="CLU_033058_3_2_9"/>
<dbReference type="Proteomes" id="UP000002211">
    <property type="component" value="Chromosome"/>
</dbReference>
<dbReference type="GO" id="GO:0005737">
    <property type="term" value="C:cytoplasm"/>
    <property type="evidence" value="ECO:0007669"/>
    <property type="project" value="UniProtKB-SubCell"/>
</dbReference>
<dbReference type="GO" id="GO:0003755">
    <property type="term" value="F:peptidyl-prolyl cis-trans isomerase activity"/>
    <property type="evidence" value="ECO:0007669"/>
    <property type="project" value="UniProtKB-UniRule"/>
</dbReference>
<dbReference type="GO" id="GO:0044183">
    <property type="term" value="F:protein folding chaperone"/>
    <property type="evidence" value="ECO:0007669"/>
    <property type="project" value="TreeGrafter"/>
</dbReference>
<dbReference type="GO" id="GO:0043022">
    <property type="term" value="F:ribosome binding"/>
    <property type="evidence" value="ECO:0007669"/>
    <property type="project" value="TreeGrafter"/>
</dbReference>
<dbReference type="GO" id="GO:0051083">
    <property type="term" value="P:'de novo' cotranslational protein folding"/>
    <property type="evidence" value="ECO:0007669"/>
    <property type="project" value="TreeGrafter"/>
</dbReference>
<dbReference type="GO" id="GO:0051301">
    <property type="term" value="P:cell division"/>
    <property type="evidence" value="ECO:0007669"/>
    <property type="project" value="UniProtKB-KW"/>
</dbReference>
<dbReference type="GO" id="GO:0061077">
    <property type="term" value="P:chaperone-mediated protein folding"/>
    <property type="evidence" value="ECO:0007669"/>
    <property type="project" value="TreeGrafter"/>
</dbReference>
<dbReference type="GO" id="GO:0015031">
    <property type="term" value="P:protein transport"/>
    <property type="evidence" value="ECO:0007669"/>
    <property type="project" value="UniProtKB-UniRule"/>
</dbReference>
<dbReference type="GO" id="GO:0043335">
    <property type="term" value="P:protein unfolding"/>
    <property type="evidence" value="ECO:0007669"/>
    <property type="project" value="TreeGrafter"/>
</dbReference>
<dbReference type="FunFam" id="3.10.50.40:FF:000001">
    <property type="entry name" value="Trigger factor"/>
    <property type="match status" value="1"/>
</dbReference>
<dbReference type="Gene3D" id="3.10.50.40">
    <property type="match status" value="1"/>
</dbReference>
<dbReference type="Gene3D" id="3.30.70.1050">
    <property type="entry name" value="Trigger factor ribosome-binding domain"/>
    <property type="match status" value="1"/>
</dbReference>
<dbReference type="Gene3D" id="1.10.3120.10">
    <property type="entry name" value="Trigger factor, C-terminal domain"/>
    <property type="match status" value="1"/>
</dbReference>
<dbReference type="HAMAP" id="MF_00303">
    <property type="entry name" value="Trigger_factor_Tig"/>
    <property type="match status" value="1"/>
</dbReference>
<dbReference type="InterPro" id="IPR046357">
    <property type="entry name" value="PPIase_dom_sf"/>
</dbReference>
<dbReference type="InterPro" id="IPR001179">
    <property type="entry name" value="PPIase_FKBP_dom"/>
</dbReference>
<dbReference type="InterPro" id="IPR005215">
    <property type="entry name" value="Trig_fac"/>
</dbReference>
<dbReference type="InterPro" id="IPR008880">
    <property type="entry name" value="Trigger_fac_C"/>
</dbReference>
<dbReference type="InterPro" id="IPR037041">
    <property type="entry name" value="Trigger_fac_C_sf"/>
</dbReference>
<dbReference type="InterPro" id="IPR008881">
    <property type="entry name" value="Trigger_fac_ribosome-bd_bac"/>
</dbReference>
<dbReference type="InterPro" id="IPR036611">
    <property type="entry name" value="Trigger_fac_ribosome-bd_sf"/>
</dbReference>
<dbReference type="InterPro" id="IPR027304">
    <property type="entry name" value="Trigger_fact/SurA_dom_sf"/>
</dbReference>
<dbReference type="NCBIfam" id="TIGR00115">
    <property type="entry name" value="tig"/>
    <property type="match status" value="1"/>
</dbReference>
<dbReference type="PANTHER" id="PTHR30560">
    <property type="entry name" value="TRIGGER FACTOR CHAPERONE AND PEPTIDYL-PROLYL CIS/TRANS ISOMERASE"/>
    <property type="match status" value="1"/>
</dbReference>
<dbReference type="PANTHER" id="PTHR30560:SF3">
    <property type="entry name" value="TRIGGER FACTOR-LIKE PROTEIN TIG, CHLOROPLASTIC"/>
    <property type="match status" value="1"/>
</dbReference>
<dbReference type="Pfam" id="PF00254">
    <property type="entry name" value="FKBP_C"/>
    <property type="match status" value="1"/>
</dbReference>
<dbReference type="Pfam" id="PF05698">
    <property type="entry name" value="Trigger_C"/>
    <property type="match status" value="1"/>
</dbReference>
<dbReference type="Pfam" id="PF05697">
    <property type="entry name" value="Trigger_N"/>
    <property type="match status" value="1"/>
</dbReference>
<dbReference type="PIRSF" id="PIRSF003095">
    <property type="entry name" value="Trigger_factor"/>
    <property type="match status" value="1"/>
</dbReference>
<dbReference type="SUPFAM" id="SSF54534">
    <property type="entry name" value="FKBP-like"/>
    <property type="match status" value="1"/>
</dbReference>
<dbReference type="SUPFAM" id="SSF109998">
    <property type="entry name" value="Triger factor/SurA peptide-binding domain-like"/>
    <property type="match status" value="1"/>
</dbReference>
<dbReference type="SUPFAM" id="SSF102735">
    <property type="entry name" value="Trigger factor ribosome-binding domain"/>
    <property type="match status" value="1"/>
</dbReference>
<dbReference type="PROSITE" id="PS50059">
    <property type="entry name" value="FKBP_PPIASE"/>
    <property type="match status" value="1"/>
</dbReference>
<reference key="1">
    <citation type="journal article" date="2010" name="Genome Biol.">
        <title>Structure and dynamics of the pan-genome of Streptococcus pneumoniae and closely related species.</title>
        <authorList>
            <person name="Donati C."/>
            <person name="Hiller N.L."/>
            <person name="Tettelin H."/>
            <person name="Muzzi A."/>
            <person name="Croucher N.J."/>
            <person name="Angiuoli S.V."/>
            <person name="Oggioni M."/>
            <person name="Dunning Hotopp J.C."/>
            <person name="Hu F.Z."/>
            <person name="Riley D.R."/>
            <person name="Covacci A."/>
            <person name="Mitchell T.J."/>
            <person name="Bentley S.D."/>
            <person name="Kilian M."/>
            <person name="Ehrlich G.D."/>
            <person name="Rappuoli R."/>
            <person name="Moxon E.R."/>
            <person name="Masignani V."/>
        </authorList>
    </citation>
    <scope>NUCLEOTIDE SEQUENCE [LARGE SCALE GENOMIC DNA]</scope>
    <source>
        <strain>70585</strain>
    </source>
</reference>
<name>TIG_STRP7</name>
<accession>C1C5D8</accession>
<keyword id="KW-0131">Cell cycle</keyword>
<keyword id="KW-0132">Cell division</keyword>
<keyword id="KW-0143">Chaperone</keyword>
<keyword id="KW-0963">Cytoplasm</keyword>
<keyword id="KW-0413">Isomerase</keyword>
<keyword id="KW-0697">Rotamase</keyword>
<sequence>MSVSFENKETNRGVLTFTISQDQIKPELDRVFKSVKKSLNVPGFRKGHLPRPIFDKKFGEESLYQDVMNALLPNAYEAAVKEAGLEVVAQPKIDVTSMEKGQDWVITAEVVTKPEVKLGDYKNLEVSVDVEKEVTDADVEERIERERNNLAELVIKEAAAENGDTVVIDFVGSIDGVEFDGGKGENFSLGLGSGQFIPGFEDQLVGHSAGETVDVIVTFPEDYQAEDLAGKEAKFVTTIHEVKAKEVPALDDELAKDIDEEVETLADLKEKYRKELATAKEEAYKDAVEGAAIDTAVENAEIVELPEEMIHEEVHRSVNEFLGNLQRQGINPDMYFQITGTTQEDLHNQYQAEAESRTKTNLVIEAVAKAEGFDASEEEIQKEVEQLAADYNMEVAQVQNLLSADMLKHDITIKKAVELITSTATVK</sequence>
<comment type="function">
    <text evidence="1">Involved in protein export. Acts as a chaperone by maintaining the newly synthesized protein in an open conformation. Functions as a peptidyl-prolyl cis-trans isomerase.</text>
</comment>
<comment type="catalytic activity">
    <reaction evidence="1">
        <text>[protein]-peptidylproline (omega=180) = [protein]-peptidylproline (omega=0)</text>
        <dbReference type="Rhea" id="RHEA:16237"/>
        <dbReference type="Rhea" id="RHEA-COMP:10747"/>
        <dbReference type="Rhea" id="RHEA-COMP:10748"/>
        <dbReference type="ChEBI" id="CHEBI:83833"/>
        <dbReference type="ChEBI" id="CHEBI:83834"/>
        <dbReference type="EC" id="5.2.1.8"/>
    </reaction>
</comment>
<comment type="subcellular location">
    <subcellularLocation>
        <location>Cytoplasm</location>
    </subcellularLocation>
    <text evidence="1">About half TF is bound to the ribosome near the polypeptide exit tunnel while the other half is free in the cytoplasm.</text>
</comment>
<comment type="domain">
    <text evidence="1">Consists of 3 domains; the N-terminus binds the ribosome, the middle domain has PPIase activity, while the C-terminus has intrinsic chaperone activity on its own.</text>
</comment>
<comment type="similarity">
    <text evidence="1">Belongs to the FKBP-type PPIase family. Tig subfamily.</text>
</comment>
<protein>
    <recommendedName>
        <fullName evidence="1">Trigger factor</fullName>
        <shortName evidence="1">TF</shortName>
        <ecNumber evidence="1">5.2.1.8</ecNumber>
    </recommendedName>
    <alternativeName>
        <fullName evidence="1">PPIase</fullName>
    </alternativeName>
</protein>
<proteinExistence type="inferred from homology"/>
<organism>
    <name type="scientific">Streptococcus pneumoniae (strain 70585)</name>
    <dbReference type="NCBI Taxonomy" id="488221"/>
    <lineage>
        <taxon>Bacteria</taxon>
        <taxon>Bacillati</taxon>
        <taxon>Bacillota</taxon>
        <taxon>Bacilli</taxon>
        <taxon>Lactobacillales</taxon>
        <taxon>Streptococcaceae</taxon>
        <taxon>Streptococcus</taxon>
    </lineage>
</organism>
<gene>
    <name evidence="1" type="primary">tig</name>
    <name type="ordered locus">SP70585_0472</name>
</gene>
<evidence type="ECO:0000255" key="1">
    <source>
        <dbReference type="HAMAP-Rule" id="MF_00303"/>
    </source>
</evidence>